<gene>
    <name evidence="1" type="primary">glgB</name>
    <name type="ordered locus">Saro_1658</name>
</gene>
<accession>Q2G7S5</accession>
<reference key="1">
    <citation type="submission" date="2006-01" db="EMBL/GenBank/DDBJ databases">
        <title>Complete sequence of Novosphingobium aromaticivorans DSM 12444.</title>
        <authorList>
            <consortium name="US DOE Joint Genome Institute"/>
            <person name="Copeland A."/>
            <person name="Lucas S."/>
            <person name="Lapidus A."/>
            <person name="Barry K."/>
            <person name="Detter J.C."/>
            <person name="Glavina T."/>
            <person name="Hammon N."/>
            <person name="Israni S."/>
            <person name="Pitluck S."/>
            <person name="Chain P."/>
            <person name="Malfatti S."/>
            <person name="Shin M."/>
            <person name="Vergez L."/>
            <person name="Schmutz J."/>
            <person name="Larimer F."/>
            <person name="Land M."/>
            <person name="Kyrpides N."/>
            <person name="Ivanova N."/>
            <person name="Fredrickson J."/>
            <person name="Balkwill D."/>
            <person name="Romine M.F."/>
            <person name="Richardson P."/>
        </authorList>
    </citation>
    <scope>NUCLEOTIDE SEQUENCE [LARGE SCALE GENOMIC DNA]</scope>
    <source>
        <strain>ATCC 700278 / DSM 12444 / CCUG 56034 / CIP 105152 / NBRC 16084 / F199</strain>
    </source>
</reference>
<organism>
    <name type="scientific">Novosphingobium aromaticivorans (strain ATCC 700278 / DSM 12444 / CCUG 56034 / CIP 105152 / NBRC 16084 / F199)</name>
    <dbReference type="NCBI Taxonomy" id="279238"/>
    <lineage>
        <taxon>Bacteria</taxon>
        <taxon>Pseudomonadati</taxon>
        <taxon>Pseudomonadota</taxon>
        <taxon>Alphaproteobacteria</taxon>
        <taxon>Sphingomonadales</taxon>
        <taxon>Sphingomonadaceae</taxon>
        <taxon>Novosphingobium</taxon>
    </lineage>
</organism>
<protein>
    <recommendedName>
        <fullName evidence="1">1,4-alpha-glucan branching enzyme GlgB</fullName>
        <ecNumber evidence="1">2.4.1.18</ecNumber>
    </recommendedName>
    <alternativeName>
        <fullName evidence="1">1,4-alpha-D-glucan:1,4-alpha-D-glucan 6-glucosyl-transferase</fullName>
    </alternativeName>
    <alternativeName>
        <fullName evidence="1">Alpha-(1-&gt;4)-glucan branching enzyme</fullName>
    </alternativeName>
    <alternativeName>
        <fullName evidence="1">Glycogen branching enzyme</fullName>
        <shortName evidence="1">BE</shortName>
    </alternativeName>
</protein>
<dbReference type="EC" id="2.4.1.18" evidence="1"/>
<dbReference type="EMBL" id="CP000248">
    <property type="protein sequence ID" value="ABD26098.1"/>
    <property type="molecule type" value="Genomic_DNA"/>
</dbReference>
<dbReference type="RefSeq" id="WP_011445308.1">
    <property type="nucleotide sequence ID" value="NC_007794.1"/>
</dbReference>
<dbReference type="SMR" id="Q2G7S5"/>
<dbReference type="STRING" id="279238.Saro_1658"/>
<dbReference type="CAZy" id="CBM48">
    <property type="family name" value="Carbohydrate-Binding Module Family 48"/>
</dbReference>
<dbReference type="CAZy" id="GH13">
    <property type="family name" value="Glycoside Hydrolase Family 13"/>
</dbReference>
<dbReference type="KEGG" id="nar:Saro_1658"/>
<dbReference type="eggNOG" id="COG0296">
    <property type="taxonomic scope" value="Bacteria"/>
</dbReference>
<dbReference type="HOGENOM" id="CLU_004245_3_2_5"/>
<dbReference type="UniPathway" id="UPA00164"/>
<dbReference type="Proteomes" id="UP000009134">
    <property type="component" value="Chromosome"/>
</dbReference>
<dbReference type="GO" id="GO:0005829">
    <property type="term" value="C:cytosol"/>
    <property type="evidence" value="ECO:0007669"/>
    <property type="project" value="TreeGrafter"/>
</dbReference>
<dbReference type="GO" id="GO:0003844">
    <property type="term" value="F:1,4-alpha-glucan branching enzyme activity"/>
    <property type="evidence" value="ECO:0007669"/>
    <property type="project" value="UniProtKB-UniRule"/>
</dbReference>
<dbReference type="GO" id="GO:0043169">
    <property type="term" value="F:cation binding"/>
    <property type="evidence" value="ECO:0007669"/>
    <property type="project" value="InterPro"/>
</dbReference>
<dbReference type="GO" id="GO:0004553">
    <property type="term" value="F:hydrolase activity, hydrolyzing O-glycosyl compounds"/>
    <property type="evidence" value="ECO:0007669"/>
    <property type="project" value="InterPro"/>
</dbReference>
<dbReference type="GO" id="GO:0005978">
    <property type="term" value="P:glycogen biosynthetic process"/>
    <property type="evidence" value="ECO:0007669"/>
    <property type="project" value="UniProtKB-UniRule"/>
</dbReference>
<dbReference type="CDD" id="cd11322">
    <property type="entry name" value="AmyAc_Glg_BE"/>
    <property type="match status" value="1"/>
</dbReference>
<dbReference type="CDD" id="cd02855">
    <property type="entry name" value="E_set_GBE_prok_N"/>
    <property type="match status" value="1"/>
</dbReference>
<dbReference type="FunFam" id="2.60.40.10:FF:000169">
    <property type="entry name" value="1,4-alpha-glucan branching enzyme GlgB"/>
    <property type="match status" value="1"/>
</dbReference>
<dbReference type="FunFam" id="2.60.40.1180:FF:000002">
    <property type="entry name" value="1,4-alpha-glucan branching enzyme GlgB"/>
    <property type="match status" value="1"/>
</dbReference>
<dbReference type="FunFam" id="3.20.20.80:FF:000003">
    <property type="entry name" value="1,4-alpha-glucan branching enzyme GlgB"/>
    <property type="match status" value="1"/>
</dbReference>
<dbReference type="Gene3D" id="3.20.20.80">
    <property type="entry name" value="Glycosidases"/>
    <property type="match status" value="1"/>
</dbReference>
<dbReference type="Gene3D" id="2.60.40.1180">
    <property type="entry name" value="Golgi alpha-mannosidase II"/>
    <property type="match status" value="1"/>
</dbReference>
<dbReference type="Gene3D" id="2.60.40.10">
    <property type="entry name" value="Immunoglobulins"/>
    <property type="match status" value="1"/>
</dbReference>
<dbReference type="HAMAP" id="MF_00685">
    <property type="entry name" value="GlgB"/>
    <property type="match status" value="1"/>
</dbReference>
<dbReference type="InterPro" id="IPR006048">
    <property type="entry name" value="A-amylase/branching_C"/>
</dbReference>
<dbReference type="InterPro" id="IPR037439">
    <property type="entry name" value="Branching_enzy"/>
</dbReference>
<dbReference type="InterPro" id="IPR006407">
    <property type="entry name" value="GlgB"/>
</dbReference>
<dbReference type="InterPro" id="IPR054169">
    <property type="entry name" value="GlgB_N"/>
</dbReference>
<dbReference type="InterPro" id="IPR044143">
    <property type="entry name" value="GlgB_N_E_set_prok"/>
</dbReference>
<dbReference type="InterPro" id="IPR006047">
    <property type="entry name" value="Glyco_hydro_13_cat_dom"/>
</dbReference>
<dbReference type="InterPro" id="IPR004193">
    <property type="entry name" value="Glyco_hydro_13_N"/>
</dbReference>
<dbReference type="InterPro" id="IPR013780">
    <property type="entry name" value="Glyco_hydro_b"/>
</dbReference>
<dbReference type="InterPro" id="IPR017853">
    <property type="entry name" value="Glycoside_hydrolase_SF"/>
</dbReference>
<dbReference type="InterPro" id="IPR013783">
    <property type="entry name" value="Ig-like_fold"/>
</dbReference>
<dbReference type="InterPro" id="IPR014756">
    <property type="entry name" value="Ig_E-set"/>
</dbReference>
<dbReference type="NCBIfam" id="TIGR01515">
    <property type="entry name" value="branching_enzym"/>
    <property type="match status" value="1"/>
</dbReference>
<dbReference type="NCBIfam" id="NF003811">
    <property type="entry name" value="PRK05402.1"/>
    <property type="match status" value="1"/>
</dbReference>
<dbReference type="NCBIfam" id="NF008967">
    <property type="entry name" value="PRK12313.1"/>
    <property type="match status" value="1"/>
</dbReference>
<dbReference type="PANTHER" id="PTHR43651">
    <property type="entry name" value="1,4-ALPHA-GLUCAN-BRANCHING ENZYME"/>
    <property type="match status" value="1"/>
</dbReference>
<dbReference type="PANTHER" id="PTHR43651:SF3">
    <property type="entry name" value="1,4-ALPHA-GLUCAN-BRANCHING ENZYME"/>
    <property type="match status" value="1"/>
</dbReference>
<dbReference type="Pfam" id="PF00128">
    <property type="entry name" value="Alpha-amylase"/>
    <property type="match status" value="1"/>
</dbReference>
<dbReference type="Pfam" id="PF02806">
    <property type="entry name" value="Alpha-amylase_C"/>
    <property type="match status" value="1"/>
</dbReference>
<dbReference type="Pfam" id="PF02922">
    <property type="entry name" value="CBM_48"/>
    <property type="match status" value="1"/>
</dbReference>
<dbReference type="Pfam" id="PF22019">
    <property type="entry name" value="GlgB_N"/>
    <property type="match status" value="1"/>
</dbReference>
<dbReference type="PIRSF" id="PIRSF000463">
    <property type="entry name" value="GlgB"/>
    <property type="match status" value="1"/>
</dbReference>
<dbReference type="SMART" id="SM00642">
    <property type="entry name" value="Aamy"/>
    <property type="match status" value="1"/>
</dbReference>
<dbReference type="SUPFAM" id="SSF51445">
    <property type="entry name" value="(Trans)glycosidases"/>
    <property type="match status" value="1"/>
</dbReference>
<dbReference type="SUPFAM" id="SSF81296">
    <property type="entry name" value="E set domains"/>
    <property type="match status" value="2"/>
</dbReference>
<dbReference type="SUPFAM" id="SSF51011">
    <property type="entry name" value="Glycosyl hydrolase domain"/>
    <property type="match status" value="1"/>
</dbReference>
<proteinExistence type="inferred from homology"/>
<name>GLGB_NOVAD</name>
<feature type="chain" id="PRO_0000260673" description="1,4-alpha-glucan branching enzyme GlgB">
    <location>
        <begin position="1"/>
        <end position="721"/>
    </location>
</feature>
<feature type="active site" description="Nucleophile" evidence="1">
    <location>
        <position position="404"/>
    </location>
</feature>
<feature type="active site" description="Proton donor" evidence="1">
    <location>
        <position position="457"/>
    </location>
</feature>
<comment type="function">
    <text evidence="1">Catalyzes the formation of the alpha-1,6-glucosidic linkages in glycogen by scission of a 1,4-alpha-linked oligosaccharide from growing alpha-1,4-glucan chains and the subsequent attachment of the oligosaccharide to the alpha-1,6 position.</text>
</comment>
<comment type="catalytic activity">
    <reaction evidence="1">
        <text>Transfers a segment of a (1-&gt;4)-alpha-D-glucan chain to a primary hydroxy group in a similar glucan chain.</text>
        <dbReference type="EC" id="2.4.1.18"/>
    </reaction>
</comment>
<comment type="pathway">
    <text evidence="1">Glycan biosynthesis; glycogen biosynthesis.</text>
</comment>
<comment type="subunit">
    <text evidence="1">Monomer.</text>
</comment>
<comment type="similarity">
    <text evidence="1">Belongs to the glycosyl hydrolase 13 family. GlgB subfamily.</text>
</comment>
<keyword id="KW-0119">Carbohydrate metabolism</keyword>
<keyword id="KW-0320">Glycogen biosynthesis</keyword>
<keyword id="KW-0321">Glycogen metabolism</keyword>
<keyword id="KW-0328">Glycosyltransferase</keyword>
<keyword id="KW-1185">Reference proteome</keyword>
<keyword id="KW-0808">Transferase</keyword>
<evidence type="ECO:0000255" key="1">
    <source>
        <dbReference type="HAMAP-Rule" id="MF_00685"/>
    </source>
</evidence>
<sequence>MKPPASAIDALLDGTHADPFSLLGIHEGPDGAFARAVLPGAEEAVAWSLSGKKLGKLSRVDGRGLFEGKVKGPRQPVRYACKADGHEWLVTDPYSFGPVLGPLDDFLIAEGTHLRLFDKMGAHLIEHEGARGVHFAVWAPNARLVSVVGDFNDWDHRRHPMRRRADIGVWEIFIPDIGEHRAYKYRIVGHDGGVLPLKADPYALAAEFRPSTASLTAHPVKMDWADAAHRAHWASVDARREPMSIYEVHPGSWQKPHEEGFHTWDELADRLIPYVAEMGFTHIEFLPVSEHPYDPSWGYQTTGLYAPSARFGPPEGFARFVDGAHRAGISVLIDWVPAHFPTDEHGLVRFDGTALYEHEDPRLGFHPDWNTLIYNFGRREVVSFLVNNALFWAERYHVDGLRVDAVASMLYRDYSRKAGEWIPNAEGGRENWEAVEFLKAMNRAVYGSHAGFLTIAEESTAWPGVSKPAFDGAPRENLGFGFKWNMGFMHDTLKYMAREPIHRRYHHDEITFGLMYAFSENFVLPLSHDEVVHGKGSLLNKMSGDDWQKFANLRAYYGLMWGYPGKKLLFMGQEFAQRREWSEARALDWDLLQAPAHEGIRRWVRDLNRVYASRPALHARDCEPEGFEWLVVDDAEASIFAWLRKAPGARPVAVICNMTPQVHDHYRLPLPLDGEWREVLNSDAEDYGGSGIGNLGKVTAEQGAAFVVLPPLATLMLEFEG</sequence>